<proteinExistence type="inferred from homology"/>
<name>PGK_TOLAT</name>
<dbReference type="EC" id="2.7.2.3" evidence="1"/>
<dbReference type="EMBL" id="CP001616">
    <property type="protein sequence ID" value="ACQ92874.1"/>
    <property type="molecule type" value="Genomic_DNA"/>
</dbReference>
<dbReference type="RefSeq" id="WP_012729473.1">
    <property type="nucleotide sequence ID" value="NC_012691.1"/>
</dbReference>
<dbReference type="SMR" id="C4LE53"/>
<dbReference type="STRING" id="595494.Tola_1257"/>
<dbReference type="KEGG" id="tau:Tola_1257"/>
<dbReference type="eggNOG" id="COG0126">
    <property type="taxonomic scope" value="Bacteria"/>
</dbReference>
<dbReference type="HOGENOM" id="CLU_025427_0_2_6"/>
<dbReference type="OrthoDB" id="9808460at2"/>
<dbReference type="UniPathway" id="UPA00109">
    <property type="reaction ID" value="UER00185"/>
</dbReference>
<dbReference type="Proteomes" id="UP000009073">
    <property type="component" value="Chromosome"/>
</dbReference>
<dbReference type="GO" id="GO:0005829">
    <property type="term" value="C:cytosol"/>
    <property type="evidence" value="ECO:0007669"/>
    <property type="project" value="TreeGrafter"/>
</dbReference>
<dbReference type="GO" id="GO:0043531">
    <property type="term" value="F:ADP binding"/>
    <property type="evidence" value="ECO:0007669"/>
    <property type="project" value="TreeGrafter"/>
</dbReference>
<dbReference type="GO" id="GO:0005524">
    <property type="term" value="F:ATP binding"/>
    <property type="evidence" value="ECO:0007669"/>
    <property type="project" value="UniProtKB-KW"/>
</dbReference>
<dbReference type="GO" id="GO:0004618">
    <property type="term" value="F:phosphoglycerate kinase activity"/>
    <property type="evidence" value="ECO:0007669"/>
    <property type="project" value="UniProtKB-UniRule"/>
</dbReference>
<dbReference type="GO" id="GO:0006094">
    <property type="term" value="P:gluconeogenesis"/>
    <property type="evidence" value="ECO:0007669"/>
    <property type="project" value="TreeGrafter"/>
</dbReference>
<dbReference type="GO" id="GO:0006096">
    <property type="term" value="P:glycolytic process"/>
    <property type="evidence" value="ECO:0007669"/>
    <property type="project" value="UniProtKB-UniRule"/>
</dbReference>
<dbReference type="FunFam" id="3.40.50.1260:FF:000001">
    <property type="entry name" value="Phosphoglycerate kinase"/>
    <property type="match status" value="1"/>
</dbReference>
<dbReference type="FunFam" id="3.40.50.1260:FF:000002">
    <property type="entry name" value="Phosphoglycerate kinase"/>
    <property type="match status" value="1"/>
</dbReference>
<dbReference type="Gene3D" id="3.40.50.1260">
    <property type="entry name" value="Phosphoglycerate kinase, N-terminal domain"/>
    <property type="match status" value="2"/>
</dbReference>
<dbReference type="HAMAP" id="MF_00145">
    <property type="entry name" value="Phosphoglyc_kinase"/>
    <property type="match status" value="1"/>
</dbReference>
<dbReference type="InterPro" id="IPR001576">
    <property type="entry name" value="Phosphoglycerate_kinase"/>
</dbReference>
<dbReference type="InterPro" id="IPR015911">
    <property type="entry name" value="Phosphoglycerate_kinase_CS"/>
</dbReference>
<dbReference type="InterPro" id="IPR015824">
    <property type="entry name" value="Phosphoglycerate_kinase_N"/>
</dbReference>
<dbReference type="InterPro" id="IPR036043">
    <property type="entry name" value="Phosphoglycerate_kinase_sf"/>
</dbReference>
<dbReference type="PANTHER" id="PTHR11406">
    <property type="entry name" value="PHOSPHOGLYCERATE KINASE"/>
    <property type="match status" value="1"/>
</dbReference>
<dbReference type="PANTHER" id="PTHR11406:SF23">
    <property type="entry name" value="PHOSPHOGLYCERATE KINASE 1, CHLOROPLASTIC-RELATED"/>
    <property type="match status" value="1"/>
</dbReference>
<dbReference type="Pfam" id="PF00162">
    <property type="entry name" value="PGK"/>
    <property type="match status" value="1"/>
</dbReference>
<dbReference type="PIRSF" id="PIRSF000724">
    <property type="entry name" value="Pgk"/>
    <property type="match status" value="1"/>
</dbReference>
<dbReference type="PRINTS" id="PR00477">
    <property type="entry name" value="PHGLYCKINASE"/>
</dbReference>
<dbReference type="SUPFAM" id="SSF53748">
    <property type="entry name" value="Phosphoglycerate kinase"/>
    <property type="match status" value="1"/>
</dbReference>
<dbReference type="PROSITE" id="PS00111">
    <property type="entry name" value="PGLYCERATE_KINASE"/>
    <property type="match status" value="1"/>
</dbReference>
<evidence type="ECO:0000255" key="1">
    <source>
        <dbReference type="HAMAP-Rule" id="MF_00145"/>
    </source>
</evidence>
<sequence length="387" mass="40731">MSVIKMTDLDLAGKRVLVRADLNVPVKDGKVTSDARIVATLPTIKLALEKGAKLMITSHLGRPTEGEYNEEFSLLPVVNYLKDKLSCPVRLAKDYLDGVEVAAGELVVLENCRFNKGEKKNTEELAKKYAALCDVFVMDAFGTAHRAEGSTYGVAQFAPVACAGPLLAGELDALGKAMLKPERPMVAIVGGSKVSTKLTVLESLSKIADQLVVGGGIANTFIAAAGHNVGKSLCEHDLIDTAKKLAAETNIPVTTDVVVGKEFSESTPATIKSVSEVTDDDMIFDIGPDSAKALADIIMNAKTILWNGPVGVFEFDQFAKGTEIIAKAIAESPAFSIAGGGDTLAAIDKFGIADKVSYISTGGGAFLEFVEGKVLPAVAILEERAKA</sequence>
<comment type="catalytic activity">
    <reaction evidence="1">
        <text>(2R)-3-phosphoglycerate + ATP = (2R)-3-phospho-glyceroyl phosphate + ADP</text>
        <dbReference type="Rhea" id="RHEA:14801"/>
        <dbReference type="ChEBI" id="CHEBI:30616"/>
        <dbReference type="ChEBI" id="CHEBI:57604"/>
        <dbReference type="ChEBI" id="CHEBI:58272"/>
        <dbReference type="ChEBI" id="CHEBI:456216"/>
        <dbReference type="EC" id="2.7.2.3"/>
    </reaction>
</comment>
<comment type="pathway">
    <text evidence="1">Carbohydrate degradation; glycolysis; pyruvate from D-glyceraldehyde 3-phosphate: step 2/5.</text>
</comment>
<comment type="subunit">
    <text evidence="1">Monomer.</text>
</comment>
<comment type="subcellular location">
    <subcellularLocation>
        <location evidence="1">Cytoplasm</location>
    </subcellularLocation>
</comment>
<comment type="similarity">
    <text evidence="1">Belongs to the phosphoglycerate kinase family.</text>
</comment>
<accession>C4LE53</accession>
<feature type="chain" id="PRO_1000203352" description="Phosphoglycerate kinase">
    <location>
        <begin position="1"/>
        <end position="387"/>
    </location>
</feature>
<feature type="binding site" evidence="1">
    <location>
        <begin position="21"/>
        <end position="23"/>
    </location>
    <ligand>
        <name>substrate</name>
    </ligand>
</feature>
<feature type="binding site" evidence="1">
    <location>
        <position position="36"/>
    </location>
    <ligand>
        <name>substrate</name>
    </ligand>
</feature>
<feature type="binding site" evidence="1">
    <location>
        <begin position="59"/>
        <end position="62"/>
    </location>
    <ligand>
        <name>substrate</name>
    </ligand>
</feature>
<feature type="binding site" evidence="1">
    <location>
        <position position="113"/>
    </location>
    <ligand>
        <name>substrate</name>
    </ligand>
</feature>
<feature type="binding site" evidence="1">
    <location>
        <position position="146"/>
    </location>
    <ligand>
        <name>substrate</name>
    </ligand>
</feature>
<feature type="binding site" evidence="1">
    <location>
        <position position="197"/>
    </location>
    <ligand>
        <name>ATP</name>
        <dbReference type="ChEBI" id="CHEBI:30616"/>
    </ligand>
</feature>
<feature type="binding site" evidence="1">
    <location>
        <position position="314"/>
    </location>
    <ligand>
        <name>ATP</name>
        <dbReference type="ChEBI" id="CHEBI:30616"/>
    </ligand>
</feature>
<feature type="binding site" evidence="1">
    <location>
        <begin position="340"/>
        <end position="343"/>
    </location>
    <ligand>
        <name>ATP</name>
        <dbReference type="ChEBI" id="CHEBI:30616"/>
    </ligand>
</feature>
<keyword id="KW-0067">ATP-binding</keyword>
<keyword id="KW-0963">Cytoplasm</keyword>
<keyword id="KW-0324">Glycolysis</keyword>
<keyword id="KW-0418">Kinase</keyword>
<keyword id="KW-0547">Nucleotide-binding</keyword>
<keyword id="KW-1185">Reference proteome</keyword>
<keyword id="KW-0808">Transferase</keyword>
<reference key="1">
    <citation type="submission" date="2009-05" db="EMBL/GenBank/DDBJ databases">
        <title>Complete sequence of Tolumonas auensis DSM 9187.</title>
        <authorList>
            <consortium name="US DOE Joint Genome Institute"/>
            <person name="Lucas S."/>
            <person name="Copeland A."/>
            <person name="Lapidus A."/>
            <person name="Glavina del Rio T."/>
            <person name="Tice H."/>
            <person name="Bruce D."/>
            <person name="Goodwin L."/>
            <person name="Pitluck S."/>
            <person name="Chertkov O."/>
            <person name="Brettin T."/>
            <person name="Detter J.C."/>
            <person name="Han C."/>
            <person name="Larimer F."/>
            <person name="Land M."/>
            <person name="Hauser L."/>
            <person name="Kyrpides N."/>
            <person name="Mikhailova N."/>
            <person name="Spring S."/>
            <person name="Beller H."/>
        </authorList>
    </citation>
    <scope>NUCLEOTIDE SEQUENCE [LARGE SCALE GENOMIC DNA]</scope>
    <source>
        <strain>DSM 9187 / NBRC 110442 / TA 4</strain>
    </source>
</reference>
<protein>
    <recommendedName>
        <fullName evidence="1">Phosphoglycerate kinase</fullName>
        <ecNumber evidence="1">2.7.2.3</ecNumber>
    </recommendedName>
</protein>
<organism>
    <name type="scientific">Tolumonas auensis (strain DSM 9187 / NBRC 110442 / TA 4)</name>
    <dbReference type="NCBI Taxonomy" id="595494"/>
    <lineage>
        <taxon>Bacteria</taxon>
        <taxon>Pseudomonadati</taxon>
        <taxon>Pseudomonadota</taxon>
        <taxon>Gammaproteobacteria</taxon>
        <taxon>Aeromonadales</taxon>
        <taxon>Aeromonadaceae</taxon>
        <taxon>Tolumonas</taxon>
    </lineage>
</organism>
<gene>
    <name evidence="1" type="primary">pgk</name>
    <name type="ordered locus">Tola_1257</name>
</gene>